<organism>
    <name type="scientific">Salmonella typhi</name>
    <dbReference type="NCBI Taxonomy" id="90370"/>
    <lineage>
        <taxon>Bacteria</taxon>
        <taxon>Pseudomonadati</taxon>
        <taxon>Pseudomonadota</taxon>
        <taxon>Gammaproteobacteria</taxon>
        <taxon>Enterobacterales</taxon>
        <taxon>Enterobacteriaceae</taxon>
        <taxon>Salmonella</taxon>
    </lineage>
</organism>
<evidence type="ECO:0000250" key="1">
    <source>
        <dbReference type="UniProtKB" id="P0A890"/>
    </source>
</evidence>
<evidence type="ECO:0000305" key="2"/>
<proteinExistence type="inferred from homology"/>
<feature type="chain" id="PRO_0000159065" description="Putative sulfur carrier protein YedF">
    <location>
        <begin position="1"/>
        <end position="77"/>
    </location>
</feature>
<feature type="active site" description="Cysteine persulfide intermediate" evidence="1">
    <location>
        <position position="17"/>
    </location>
</feature>
<sequence length="77" mass="8639">MKNIVPDYRLDMVGEPCPYPAVATLEAMPQLKKGEILEVVSDCPQSINNIPLDARNHGYTVLDIQQDGPTIRYLIQK</sequence>
<name>YEDF_SALTI</name>
<dbReference type="EMBL" id="AL513382">
    <property type="protein sequence ID" value="CAD05714.1"/>
    <property type="molecule type" value="Genomic_DNA"/>
</dbReference>
<dbReference type="EMBL" id="AE014613">
    <property type="protein sequence ID" value="AAO68589.1"/>
    <property type="molecule type" value="Genomic_DNA"/>
</dbReference>
<dbReference type="RefSeq" id="NP_456527.1">
    <property type="nucleotide sequence ID" value="NC_003198.1"/>
</dbReference>
<dbReference type="RefSeq" id="WP_000790504.1">
    <property type="nucleotide sequence ID" value="NZ_WSUR01000004.1"/>
</dbReference>
<dbReference type="BMRB" id="P0AA35"/>
<dbReference type="SMR" id="P0AA35"/>
<dbReference type="STRING" id="220341.gene:17586082"/>
<dbReference type="GeneID" id="93775259"/>
<dbReference type="KEGG" id="stt:t0911"/>
<dbReference type="KEGG" id="sty:STY2174"/>
<dbReference type="PATRIC" id="fig|220341.7.peg.2188"/>
<dbReference type="eggNOG" id="COG0425">
    <property type="taxonomic scope" value="Bacteria"/>
</dbReference>
<dbReference type="HOGENOM" id="CLU_165255_0_0_6"/>
<dbReference type="OMA" id="PSEWRIL"/>
<dbReference type="OrthoDB" id="5325383at2"/>
<dbReference type="Proteomes" id="UP000000541">
    <property type="component" value="Chromosome"/>
</dbReference>
<dbReference type="Proteomes" id="UP000002670">
    <property type="component" value="Chromosome"/>
</dbReference>
<dbReference type="CDD" id="cd03422">
    <property type="entry name" value="YedF"/>
    <property type="match status" value="1"/>
</dbReference>
<dbReference type="FunFam" id="3.30.110.40:FF:000001">
    <property type="entry name" value="SirA-like family protein"/>
    <property type="match status" value="1"/>
</dbReference>
<dbReference type="Gene3D" id="3.30.110.40">
    <property type="entry name" value="TusA-like domain"/>
    <property type="match status" value="1"/>
</dbReference>
<dbReference type="InterPro" id="IPR001455">
    <property type="entry name" value="TusA-like"/>
</dbReference>
<dbReference type="InterPro" id="IPR036868">
    <property type="entry name" value="TusA-like_sf"/>
</dbReference>
<dbReference type="InterPro" id="IPR049570">
    <property type="entry name" value="YedF"/>
</dbReference>
<dbReference type="NCBIfam" id="NF008242">
    <property type="entry name" value="PRK11018.1"/>
    <property type="match status" value="1"/>
</dbReference>
<dbReference type="PANTHER" id="PTHR33279">
    <property type="entry name" value="SULFUR CARRIER PROTEIN YEDF-RELATED"/>
    <property type="match status" value="1"/>
</dbReference>
<dbReference type="PANTHER" id="PTHR33279:SF6">
    <property type="entry name" value="SULFUR CARRIER PROTEIN YEDF-RELATED"/>
    <property type="match status" value="1"/>
</dbReference>
<dbReference type="Pfam" id="PF01206">
    <property type="entry name" value="TusA"/>
    <property type="match status" value="1"/>
</dbReference>
<dbReference type="SUPFAM" id="SSF64307">
    <property type="entry name" value="SirA-like"/>
    <property type="match status" value="1"/>
</dbReference>
<dbReference type="PROSITE" id="PS01148">
    <property type="entry name" value="UPF0033"/>
    <property type="match status" value="1"/>
</dbReference>
<accession>P0AA35</accession>
<accession>P31065</accession>
<comment type="similarity">
    <text evidence="2">Belongs to the sulfur carrier protein TusA family.</text>
</comment>
<gene>
    <name type="primary">yedF</name>
    <name type="ordered locus">STY2174</name>
    <name type="ordered locus">t0911</name>
</gene>
<reference key="1">
    <citation type="journal article" date="2001" name="Nature">
        <title>Complete genome sequence of a multiple drug resistant Salmonella enterica serovar Typhi CT18.</title>
        <authorList>
            <person name="Parkhill J."/>
            <person name="Dougan G."/>
            <person name="James K.D."/>
            <person name="Thomson N.R."/>
            <person name="Pickard D."/>
            <person name="Wain J."/>
            <person name="Churcher C.M."/>
            <person name="Mungall K.L."/>
            <person name="Bentley S.D."/>
            <person name="Holden M.T.G."/>
            <person name="Sebaihia M."/>
            <person name="Baker S."/>
            <person name="Basham D."/>
            <person name="Brooks K."/>
            <person name="Chillingworth T."/>
            <person name="Connerton P."/>
            <person name="Cronin A."/>
            <person name="Davis P."/>
            <person name="Davies R.M."/>
            <person name="Dowd L."/>
            <person name="White N."/>
            <person name="Farrar J."/>
            <person name="Feltwell T."/>
            <person name="Hamlin N."/>
            <person name="Haque A."/>
            <person name="Hien T.T."/>
            <person name="Holroyd S."/>
            <person name="Jagels K."/>
            <person name="Krogh A."/>
            <person name="Larsen T.S."/>
            <person name="Leather S."/>
            <person name="Moule S."/>
            <person name="O'Gaora P."/>
            <person name="Parry C."/>
            <person name="Quail M.A."/>
            <person name="Rutherford K.M."/>
            <person name="Simmonds M."/>
            <person name="Skelton J."/>
            <person name="Stevens K."/>
            <person name="Whitehead S."/>
            <person name="Barrell B.G."/>
        </authorList>
    </citation>
    <scope>NUCLEOTIDE SEQUENCE [LARGE SCALE GENOMIC DNA]</scope>
    <source>
        <strain>CT18</strain>
    </source>
</reference>
<reference key="2">
    <citation type="journal article" date="2003" name="J. Bacteriol.">
        <title>Comparative genomics of Salmonella enterica serovar Typhi strains Ty2 and CT18.</title>
        <authorList>
            <person name="Deng W."/>
            <person name="Liou S.-R."/>
            <person name="Plunkett G. III"/>
            <person name="Mayhew G.F."/>
            <person name="Rose D.J."/>
            <person name="Burland V."/>
            <person name="Kodoyianni V."/>
            <person name="Schwartz D.C."/>
            <person name="Blattner F.R."/>
        </authorList>
    </citation>
    <scope>NUCLEOTIDE SEQUENCE [LARGE SCALE GENOMIC DNA]</scope>
    <source>
        <strain>ATCC 700931 / Ty2</strain>
    </source>
</reference>
<protein>
    <recommendedName>
        <fullName>Putative sulfur carrier protein YedF</fullName>
    </recommendedName>
</protein>